<gene>
    <name evidence="1" type="primary">pcm</name>
    <name type="ordered locus">Fnod_0742</name>
</gene>
<reference key="1">
    <citation type="submission" date="2007-07" db="EMBL/GenBank/DDBJ databases">
        <title>Complete sequence of Fervidobacterium nodosum Rt17-B1.</title>
        <authorList>
            <consortium name="US DOE Joint Genome Institute"/>
            <person name="Copeland A."/>
            <person name="Lucas S."/>
            <person name="Lapidus A."/>
            <person name="Barry K."/>
            <person name="Glavina del Rio T."/>
            <person name="Dalin E."/>
            <person name="Tice H."/>
            <person name="Pitluck S."/>
            <person name="Saunders E."/>
            <person name="Brettin T."/>
            <person name="Bruce D."/>
            <person name="Detter J.C."/>
            <person name="Han C."/>
            <person name="Schmutz J."/>
            <person name="Larimer F."/>
            <person name="Land M."/>
            <person name="Hauser L."/>
            <person name="Kyrpides N."/>
            <person name="Mikhailova N."/>
            <person name="Nelson K."/>
            <person name="Gogarten J.P."/>
            <person name="Noll K."/>
            <person name="Richardson P."/>
        </authorList>
    </citation>
    <scope>NUCLEOTIDE SEQUENCE [LARGE SCALE GENOMIC DNA]</scope>
    <source>
        <strain>ATCC 35602 / DSM 5306 / Rt17-B1</strain>
    </source>
</reference>
<organism>
    <name type="scientific">Fervidobacterium nodosum (strain ATCC 35602 / DSM 5306 / Rt17-B1)</name>
    <dbReference type="NCBI Taxonomy" id="381764"/>
    <lineage>
        <taxon>Bacteria</taxon>
        <taxon>Thermotogati</taxon>
        <taxon>Thermotogota</taxon>
        <taxon>Thermotogae</taxon>
        <taxon>Thermotogales</taxon>
        <taxon>Fervidobacteriaceae</taxon>
        <taxon>Fervidobacterium</taxon>
    </lineage>
</organism>
<accession>A7HL14</accession>
<dbReference type="EC" id="2.1.1.77" evidence="1"/>
<dbReference type="EMBL" id="CP000771">
    <property type="protein sequence ID" value="ABS60597.1"/>
    <property type="molecule type" value="Genomic_DNA"/>
</dbReference>
<dbReference type="RefSeq" id="WP_011993915.1">
    <property type="nucleotide sequence ID" value="NC_009718.1"/>
</dbReference>
<dbReference type="SMR" id="A7HL14"/>
<dbReference type="STRING" id="381764.Fnod_0742"/>
<dbReference type="KEGG" id="fno:Fnod_0742"/>
<dbReference type="eggNOG" id="COG2518">
    <property type="taxonomic scope" value="Bacteria"/>
</dbReference>
<dbReference type="HOGENOM" id="CLU_055432_2_0_0"/>
<dbReference type="OrthoDB" id="9772751at2"/>
<dbReference type="Proteomes" id="UP000002415">
    <property type="component" value="Chromosome"/>
</dbReference>
<dbReference type="GO" id="GO:0005737">
    <property type="term" value="C:cytoplasm"/>
    <property type="evidence" value="ECO:0007669"/>
    <property type="project" value="UniProtKB-SubCell"/>
</dbReference>
<dbReference type="GO" id="GO:0004719">
    <property type="term" value="F:protein-L-isoaspartate (D-aspartate) O-methyltransferase activity"/>
    <property type="evidence" value="ECO:0007669"/>
    <property type="project" value="UniProtKB-UniRule"/>
</dbReference>
<dbReference type="GO" id="GO:0032259">
    <property type="term" value="P:methylation"/>
    <property type="evidence" value="ECO:0007669"/>
    <property type="project" value="UniProtKB-KW"/>
</dbReference>
<dbReference type="GO" id="GO:0036211">
    <property type="term" value="P:protein modification process"/>
    <property type="evidence" value="ECO:0007669"/>
    <property type="project" value="UniProtKB-UniRule"/>
</dbReference>
<dbReference type="GO" id="GO:0030091">
    <property type="term" value="P:protein repair"/>
    <property type="evidence" value="ECO:0007669"/>
    <property type="project" value="UniProtKB-UniRule"/>
</dbReference>
<dbReference type="CDD" id="cd02440">
    <property type="entry name" value="AdoMet_MTases"/>
    <property type="match status" value="1"/>
</dbReference>
<dbReference type="FunFam" id="3.40.50.150:FF:000010">
    <property type="entry name" value="Protein-L-isoaspartate O-methyltransferase"/>
    <property type="match status" value="1"/>
</dbReference>
<dbReference type="Gene3D" id="3.40.50.150">
    <property type="entry name" value="Vaccinia Virus protein VP39"/>
    <property type="match status" value="1"/>
</dbReference>
<dbReference type="HAMAP" id="MF_00090">
    <property type="entry name" value="PIMT"/>
    <property type="match status" value="1"/>
</dbReference>
<dbReference type="InterPro" id="IPR000682">
    <property type="entry name" value="PCMT"/>
</dbReference>
<dbReference type="InterPro" id="IPR029063">
    <property type="entry name" value="SAM-dependent_MTases_sf"/>
</dbReference>
<dbReference type="NCBIfam" id="TIGR00080">
    <property type="entry name" value="pimt"/>
    <property type="match status" value="1"/>
</dbReference>
<dbReference type="NCBIfam" id="NF001453">
    <property type="entry name" value="PRK00312.1"/>
    <property type="match status" value="1"/>
</dbReference>
<dbReference type="PANTHER" id="PTHR11579">
    <property type="entry name" value="PROTEIN-L-ISOASPARTATE O-METHYLTRANSFERASE"/>
    <property type="match status" value="1"/>
</dbReference>
<dbReference type="PANTHER" id="PTHR11579:SF0">
    <property type="entry name" value="PROTEIN-L-ISOASPARTATE(D-ASPARTATE) O-METHYLTRANSFERASE"/>
    <property type="match status" value="1"/>
</dbReference>
<dbReference type="Pfam" id="PF01135">
    <property type="entry name" value="PCMT"/>
    <property type="match status" value="1"/>
</dbReference>
<dbReference type="SUPFAM" id="SSF53335">
    <property type="entry name" value="S-adenosyl-L-methionine-dependent methyltransferases"/>
    <property type="match status" value="1"/>
</dbReference>
<dbReference type="PROSITE" id="PS01279">
    <property type="entry name" value="PCMT"/>
    <property type="match status" value="1"/>
</dbReference>
<name>PIMT_FERNB</name>
<keyword id="KW-0963">Cytoplasm</keyword>
<keyword id="KW-0489">Methyltransferase</keyword>
<keyword id="KW-1185">Reference proteome</keyword>
<keyword id="KW-0949">S-adenosyl-L-methionine</keyword>
<keyword id="KW-0808">Transferase</keyword>
<comment type="function">
    <text evidence="1">Catalyzes the methyl esterification of L-isoaspartyl residues in peptides and proteins that result from spontaneous decomposition of normal L-aspartyl and L-asparaginyl residues. It plays a role in the repair and/or degradation of damaged proteins.</text>
</comment>
<comment type="catalytic activity">
    <reaction evidence="1">
        <text>[protein]-L-isoaspartate + S-adenosyl-L-methionine = [protein]-L-isoaspartate alpha-methyl ester + S-adenosyl-L-homocysteine</text>
        <dbReference type="Rhea" id="RHEA:12705"/>
        <dbReference type="Rhea" id="RHEA-COMP:12143"/>
        <dbReference type="Rhea" id="RHEA-COMP:12144"/>
        <dbReference type="ChEBI" id="CHEBI:57856"/>
        <dbReference type="ChEBI" id="CHEBI:59789"/>
        <dbReference type="ChEBI" id="CHEBI:90596"/>
        <dbReference type="ChEBI" id="CHEBI:90598"/>
        <dbReference type="EC" id="2.1.1.77"/>
    </reaction>
</comment>
<comment type="subcellular location">
    <subcellularLocation>
        <location evidence="1">Cytoplasm</location>
    </subcellularLocation>
</comment>
<comment type="similarity">
    <text evidence="1">Belongs to the methyltransferase superfamily. L-isoaspartyl/D-aspartyl protein methyltransferase family.</text>
</comment>
<sequence length="199" mass="22484">MLFEHLQYYGVSRKIIEAMNKVDRKLFVPSELQESAYLDIPLPIGYGQTISAPHMVGMMCEYLELKDGDRVLEIGTGSGYNAAVMSLLVGESGWIYTIERIPELVQEAQKRINLLGINNITIIVGDGKEGLEEYAPFDKITVTCYAKHIPKKLIEQLKDNGIMVIPVGNEYVQILKLIRKSGEKIIEEDLTHVRFVPMQ</sequence>
<protein>
    <recommendedName>
        <fullName evidence="1">Protein-L-isoaspartate O-methyltransferase</fullName>
        <ecNumber evidence="1">2.1.1.77</ecNumber>
    </recommendedName>
    <alternativeName>
        <fullName evidence="1">L-isoaspartyl protein carboxyl methyltransferase</fullName>
    </alternativeName>
    <alternativeName>
        <fullName evidence="1">Protein L-isoaspartyl methyltransferase</fullName>
    </alternativeName>
    <alternativeName>
        <fullName evidence="1">Protein-beta-aspartate methyltransferase</fullName>
        <shortName evidence="1">PIMT</shortName>
    </alternativeName>
</protein>
<evidence type="ECO:0000255" key="1">
    <source>
        <dbReference type="HAMAP-Rule" id="MF_00090"/>
    </source>
</evidence>
<feature type="chain" id="PRO_0000351858" description="Protein-L-isoaspartate O-methyltransferase">
    <location>
        <begin position="1"/>
        <end position="199"/>
    </location>
</feature>
<feature type="active site" evidence="1">
    <location>
        <position position="51"/>
    </location>
</feature>
<proteinExistence type="inferred from homology"/>